<reference key="1">
    <citation type="submission" date="1998-01" db="EMBL/GenBank/DDBJ databases">
        <title>Do sexual bacteria have species?</title>
        <authorList>
            <person name="Smith N.H."/>
            <person name="Donovan G.M."/>
            <person name="Carpenter A."/>
            <person name="Spratt B.G."/>
        </authorList>
    </citation>
    <scope>NUCLEOTIDE SEQUENCE [GENOMIC DNA]</scope>
    <source>
        <strain>ATCC 29315 / CIP 82.85 / CCUG 6508 / NCTC 11050</strain>
    </source>
</reference>
<accession>O86382</accession>
<keyword id="KW-0067">ATP-binding</keyword>
<keyword id="KW-0963">Cytoplasm</keyword>
<keyword id="KW-0227">DNA damage</keyword>
<keyword id="KW-0233">DNA recombination</keyword>
<keyword id="KW-0234">DNA repair</keyword>
<keyword id="KW-0238">DNA-binding</keyword>
<keyword id="KW-0547">Nucleotide-binding</keyword>
<keyword id="KW-0742">SOS response</keyword>
<protein>
    <recommendedName>
        <fullName>Protein RecA</fullName>
    </recommendedName>
    <alternativeName>
        <fullName>Recombinase A</fullName>
    </alternativeName>
</protein>
<evidence type="ECO:0000250" key="1"/>
<evidence type="ECO:0000305" key="2"/>
<gene>
    <name type="primary">recA</name>
</gene>
<comment type="function">
    <text evidence="1">Can catalyze the hydrolysis of ATP in the presence of single-stranded DNA, the ATP-dependent uptake of single-stranded DNA by duplex DNA, and the ATP-dependent hybridization of homologous single-stranded DNAs. It interacts with LexA causing its activation and leading to its autocatalytic cleavage (By similarity).</text>
</comment>
<comment type="subcellular location">
    <subcellularLocation>
        <location evidence="1">Cytoplasm</location>
    </subcellularLocation>
</comment>
<comment type="similarity">
    <text evidence="2">Belongs to the RecA family.</text>
</comment>
<proteinExistence type="inferred from homology"/>
<feature type="chain" id="PRO_0000122772" description="Protein RecA">
    <location>
        <begin position="1" status="less than"/>
        <end position="237" status="greater than"/>
    </location>
</feature>
<feature type="binding site" evidence="1">
    <location>
        <begin position="26"/>
        <end position="33"/>
    </location>
    <ligand>
        <name>ATP</name>
        <dbReference type="ChEBI" id="CHEBI:30616"/>
    </ligand>
</feature>
<feature type="non-terminal residue">
    <location>
        <position position="1"/>
    </location>
</feature>
<feature type="non-terminal residue">
    <location>
        <position position="237"/>
    </location>
</feature>
<name>RECA_NEIEG</name>
<dbReference type="EMBL" id="AJ223878">
    <property type="protein sequence ID" value="CAA11609.1"/>
    <property type="molecule type" value="Genomic_DNA"/>
</dbReference>
<dbReference type="SMR" id="O86382"/>
<dbReference type="GO" id="GO:0005829">
    <property type="term" value="C:cytosol"/>
    <property type="evidence" value="ECO:0007669"/>
    <property type="project" value="TreeGrafter"/>
</dbReference>
<dbReference type="GO" id="GO:0005524">
    <property type="term" value="F:ATP binding"/>
    <property type="evidence" value="ECO:0007669"/>
    <property type="project" value="UniProtKB-KW"/>
</dbReference>
<dbReference type="GO" id="GO:0016887">
    <property type="term" value="F:ATP hydrolysis activity"/>
    <property type="evidence" value="ECO:0007669"/>
    <property type="project" value="InterPro"/>
</dbReference>
<dbReference type="GO" id="GO:0140664">
    <property type="term" value="F:ATP-dependent DNA damage sensor activity"/>
    <property type="evidence" value="ECO:0007669"/>
    <property type="project" value="InterPro"/>
</dbReference>
<dbReference type="GO" id="GO:0003697">
    <property type="term" value="F:single-stranded DNA binding"/>
    <property type="evidence" value="ECO:0007669"/>
    <property type="project" value="InterPro"/>
</dbReference>
<dbReference type="GO" id="GO:0006310">
    <property type="term" value="P:DNA recombination"/>
    <property type="evidence" value="ECO:0007669"/>
    <property type="project" value="UniProtKB-KW"/>
</dbReference>
<dbReference type="GO" id="GO:0006281">
    <property type="term" value="P:DNA repair"/>
    <property type="evidence" value="ECO:0007669"/>
    <property type="project" value="UniProtKB-KW"/>
</dbReference>
<dbReference type="GO" id="GO:0009432">
    <property type="term" value="P:SOS response"/>
    <property type="evidence" value="ECO:0007669"/>
    <property type="project" value="UniProtKB-KW"/>
</dbReference>
<dbReference type="CDD" id="cd00983">
    <property type="entry name" value="RecA"/>
    <property type="match status" value="1"/>
</dbReference>
<dbReference type="FunFam" id="3.40.50.300:FF:000087">
    <property type="entry name" value="Recombinase RecA"/>
    <property type="match status" value="1"/>
</dbReference>
<dbReference type="Gene3D" id="3.40.50.300">
    <property type="entry name" value="P-loop containing nucleotide triphosphate hydrolases"/>
    <property type="match status" value="1"/>
</dbReference>
<dbReference type="InterPro" id="IPR003593">
    <property type="entry name" value="AAA+_ATPase"/>
</dbReference>
<dbReference type="InterPro" id="IPR013765">
    <property type="entry name" value="DNA_recomb/repair_RecA"/>
</dbReference>
<dbReference type="InterPro" id="IPR020584">
    <property type="entry name" value="DNA_recomb/repair_RecA_CS"/>
</dbReference>
<dbReference type="InterPro" id="IPR027417">
    <property type="entry name" value="P-loop_NTPase"/>
</dbReference>
<dbReference type="InterPro" id="IPR049428">
    <property type="entry name" value="RecA-like_N"/>
</dbReference>
<dbReference type="InterPro" id="IPR020588">
    <property type="entry name" value="RecA_ATP-bd"/>
</dbReference>
<dbReference type="InterPro" id="IPR020587">
    <property type="entry name" value="RecA_monomer-monomer_interface"/>
</dbReference>
<dbReference type="NCBIfam" id="TIGR02012">
    <property type="entry name" value="tigrfam_recA"/>
    <property type="match status" value="1"/>
</dbReference>
<dbReference type="PANTHER" id="PTHR45900:SF1">
    <property type="entry name" value="MITOCHONDRIAL DNA REPAIR PROTEIN RECA HOMOLOG-RELATED"/>
    <property type="match status" value="1"/>
</dbReference>
<dbReference type="PANTHER" id="PTHR45900">
    <property type="entry name" value="RECA"/>
    <property type="match status" value="1"/>
</dbReference>
<dbReference type="Pfam" id="PF00154">
    <property type="entry name" value="RecA"/>
    <property type="match status" value="1"/>
</dbReference>
<dbReference type="PRINTS" id="PR00142">
    <property type="entry name" value="RECA"/>
</dbReference>
<dbReference type="SMART" id="SM00382">
    <property type="entry name" value="AAA"/>
    <property type="match status" value="1"/>
</dbReference>
<dbReference type="SUPFAM" id="SSF52540">
    <property type="entry name" value="P-loop containing nucleoside triphosphate hydrolases"/>
    <property type="match status" value="1"/>
</dbReference>
<dbReference type="PROSITE" id="PS00321">
    <property type="entry name" value="RECA_1"/>
    <property type="match status" value="1"/>
</dbReference>
<dbReference type="PROSITE" id="PS50162">
    <property type="entry name" value="RECA_2"/>
    <property type="match status" value="1"/>
</dbReference>
<dbReference type="PROSITE" id="PS50163">
    <property type="entry name" value="RECA_3"/>
    <property type="match status" value="1"/>
</dbReference>
<sequence>STGSLGLDLALGVGGLPRGRIVEIFGPESSGKTTLCLETIAQCQKNGGVCAFIDAENAFDPIYARKLGVKVEELMVSQPDTGEQALEICDMLVRSGGVDMVVIDSVAALVPKAEIEGDMGDSHVGLQARLMSQALRKLTGHIKKTNTLVVFINQIRMKIGVMFGSPETTTGGNALKFYASVRLDIRRGLQIKKGDDVIGNETKVKVIKNKVAPPFRQAEFDILYGEGVSWEGELIDL</sequence>
<organism>
    <name type="scientific">Neisseria elongata subsp. glycolytica</name>
    <dbReference type="NCBI Taxonomy" id="88719"/>
    <lineage>
        <taxon>Bacteria</taxon>
        <taxon>Pseudomonadati</taxon>
        <taxon>Pseudomonadota</taxon>
        <taxon>Betaproteobacteria</taxon>
        <taxon>Neisseriales</taxon>
        <taxon>Neisseriaceae</taxon>
        <taxon>Neisseria</taxon>
    </lineage>
</organism>